<evidence type="ECO:0000250" key="1">
    <source>
        <dbReference type="UniProtKB" id="Q5BJM5"/>
    </source>
</evidence>
<evidence type="ECO:0000250" key="2">
    <source>
        <dbReference type="UniProtKB" id="Q9JIY0"/>
    </source>
</evidence>
<evidence type="ECO:0000255" key="3"/>
<evidence type="ECO:0000255" key="4">
    <source>
        <dbReference type="PROSITE-ProRule" id="PRU00145"/>
    </source>
</evidence>
<evidence type="ECO:0000256" key="5">
    <source>
        <dbReference type="SAM" id="MobiDB-lite"/>
    </source>
</evidence>
<evidence type="ECO:0000269" key="6">
    <source>
    </source>
</evidence>
<evidence type="ECO:0000269" key="7">
    <source>
    </source>
</evidence>
<evidence type="ECO:0000269" key="8">
    <source>
    </source>
</evidence>
<evidence type="ECO:0000269" key="9">
    <source>
    </source>
</evidence>
<evidence type="ECO:0000269" key="10">
    <source>
    </source>
</evidence>
<evidence type="ECO:0000269" key="11">
    <source>
    </source>
</evidence>
<evidence type="ECO:0000269" key="12">
    <source>
    </source>
</evidence>
<evidence type="ECO:0000269" key="13">
    <source>
    </source>
</evidence>
<evidence type="ECO:0000269" key="14">
    <source>
    </source>
</evidence>
<evidence type="ECO:0000269" key="15">
    <source>
    </source>
</evidence>
<evidence type="ECO:0000305" key="16"/>
<evidence type="ECO:0000305" key="17">
    <source>
    </source>
</evidence>
<evidence type="ECO:0007829" key="18">
    <source>
        <dbReference type="PDB" id="3AA1"/>
    </source>
</evidence>
<feature type="chain" id="PRO_0000310423" description="Pleckstrin homology domain-containing family O member 1">
    <location>
        <begin position="1"/>
        <end position="409"/>
    </location>
</feature>
<feature type="domain" description="PH" evidence="4">
    <location>
        <begin position="21"/>
        <end position="132"/>
    </location>
</feature>
<feature type="region of interest" description="Disordered" evidence="5">
    <location>
        <begin position="1"/>
        <end position="24"/>
    </location>
</feature>
<feature type="region of interest" description="Interaction with capping proteins (CPs)">
    <location>
        <begin position="133"/>
        <end position="193"/>
    </location>
</feature>
<feature type="region of interest" description="Interaction with ATM, CKIP, IFP35 and NMI" evidence="12 14">
    <location>
        <begin position="136"/>
        <end position="308"/>
    </location>
</feature>
<feature type="region of interest" description="Disordered" evidence="5">
    <location>
        <begin position="218"/>
        <end position="267"/>
    </location>
</feature>
<feature type="region of interest" description="Negative regulator of AP-1 activity">
    <location>
        <begin position="308"/>
        <end position="409"/>
    </location>
</feature>
<feature type="region of interest" description="Disordered" evidence="5">
    <location>
        <begin position="325"/>
        <end position="350"/>
    </location>
</feature>
<feature type="region of interest" description="Disordered" evidence="5">
    <location>
        <begin position="390"/>
        <end position="409"/>
    </location>
</feature>
<feature type="compositionally biased region" description="Basic and acidic residues" evidence="5">
    <location>
        <begin position="331"/>
        <end position="340"/>
    </location>
</feature>
<feature type="compositionally biased region" description="Polar residues" evidence="5">
    <location>
        <begin position="390"/>
        <end position="402"/>
    </location>
</feature>
<feature type="site" description="Interacts with capping protein">
    <location>
        <position position="155"/>
    </location>
</feature>
<feature type="site" description="Interacts with capping protein">
    <location>
        <position position="157"/>
    </location>
</feature>
<feature type="site" description="Cleavage; by caspase-3" evidence="3">
    <location>
        <begin position="310"/>
        <end position="311"/>
    </location>
</feature>
<feature type="site" description="Cleavage; by caspase-3" evidence="3">
    <location>
        <begin position="345"/>
        <end position="346"/>
    </location>
</feature>
<feature type="modified residue" description="Phosphoserine" evidence="2">
    <location>
        <position position="227"/>
    </location>
</feature>
<feature type="modified residue" description="Phosphoserine" evidence="2">
    <location>
        <position position="271"/>
    </location>
</feature>
<feature type="modified residue" description="Phosphoserine" evidence="1">
    <location>
        <position position="342"/>
    </location>
</feature>
<feature type="splice variant" id="VSP_029282" description="In isoform 2." evidence="16">
    <location>
        <begin position="142"/>
        <end position="175"/>
    </location>
</feature>
<feature type="sequence variant" id="VAR_037034" description="In dbSNP:rs2306235.">
    <original>P</original>
    <variation>A</variation>
    <location>
        <position position="21"/>
    </location>
</feature>
<feature type="mutagenesis site" description="No effect on subcellular localization. No effect on subcellular localization; when associated with C-44. Disruption of membrane localization, loss of phospholipid binding and impaired interaction with CK2; when associated with W-123. Disruption of membrane localization, loss of phospholipid binding and impaired interaction with CK2; when associated with C-44 and W-123." evidence="9">
    <original>K</original>
    <variation>C</variation>
    <location>
        <position position="42"/>
    </location>
</feature>
<feature type="mutagenesis site" description="No effect on subcellular localization. No effect on subcellular localization; when associated with C-42. Disruption of membrane localization, loss of phospholipid binding and impaired interaction with CK2; when associated with W-123. Disruption of membrane localization, loss of phospholipid binding and impaired interaction with CK2; when associated with C-42 and W-123." evidence="9">
    <original>R</original>
    <variation>C</variation>
    <location>
        <position position="44"/>
    </location>
</feature>
<feature type="mutagenesis site" description="Disruption of membrane localization and impaired interaction with CK2. Loss of phospholipid binding; when associated with C-42. Loss of phospholipid binding; when associated with C-44. Disruption of membrane localization, loss of phospholipid binding and impaired interaction with CK2; when associated with C-42 and C-44." evidence="9">
    <original>W</original>
    <variation>A</variation>
    <location>
        <position position="123"/>
    </location>
</feature>
<feature type="mutagenesis site" description="No effect on binding to capping proteins and loss of phospholipid binding; when associated with A-135 and A-137.">
    <original>R</original>
    <variation>A</variation>
    <location>
        <position position="133"/>
    </location>
</feature>
<feature type="mutagenesis site" description="No effect on binding to capping proteins; when associated with E-135.">
    <original>R</original>
    <variation>E</variation>
    <location>
        <position position="133"/>
    </location>
</feature>
<feature type="mutagenesis site" description="No effect on binding to capping proteins; when associated with A-133 and A-137.">
    <original>K</original>
    <variation>A</variation>
    <location>
        <position position="135"/>
    </location>
</feature>
<feature type="mutagenesis site" description="No effect on binding to capping proteins; when associated with E-133.">
    <original>K</original>
    <variation>E</variation>
    <location>
        <position position="135"/>
    </location>
</feature>
<feature type="mutagenesis site" description="No effect on binding to capping proteins; when associated with A-133 and A-135.">
    <original>R</original>
    <variation>A</variation>
    <location>
        <position position="137"/>
    </location>
</feature>
<feature type="mutagenesis site" description="No change in cell morphology and actin cytoskeleton. Great loss of binding to capping proteins; when associated with A-157. Great loss of binding to capping proteins; when associated with A-157 and A-159." evidence="13">
    <original>R</original>
    <variation>A</variation>
    <location>
        <position position="155"/>
    </location>
</feature>
<feature type="mutagenesis site" description="No change in cell morphology and actin cytoskeleton. Great loss of binding to capping proteins and no change in cell morphology and actin cytoskeleton; when associated with E-157." evidence="13">
    <original>R</original>
    <variation>E</variation>
    <location>
        <position position="155"/>
    </location>
</feature>
<feature type="mutagenesis site" description="No change in cell morphology and actin cytoskeleton. Great loss of binding to capping proteins; when associated with A-155. Great loss of binding to capping proteins; when associated with A-155 and A-159." evidence="13">
    <original>R</original>
    <variation>A</variation>
    <location>
        <position position="157"/>
    </location>
</feature>
<feature type="mutagenesis site" description="No change in cell morphology and actin cytoskeleton. Great loss of binding to capping proteins and no change in cell morphology and actin cytoskeleton; when associated with E-155." evidence="13">
    <original>R</original>
    <variation>E</variation>
    <location>
        <position position="157"/>
    </location>
</feature>
<feature type="mutagenesis site" description="Great loss of binding to capping proteins; when associated with A-155 and A-157.">
    <original>K</original>
    <variation>A</variation>
    <location>
        <position position="159"/>
    </location>
</feature>
<feature type="sequence conflict" description="In Ref. 8; AAH23533." evidence="16" ref="8">
    <original>MMKKNNSAKR</original>
    <variation>VRRCCRGWRSPVFTNPHVSPLSTAPAHWAPGRPAAGSLGLRVSPEPPPERGSLPPGERSPAASKPPSSPS</variation>
    <location>
        <begin position="1"/>
        <end position="10"/>
    </location>
</feature>
<feature type="sequence conflict" description="In Ref. 5; BAD96641." evidence="16" ref="5">
    <original>R</original>
    <variation>H</variation>
    <location>
        <position position="285"/>
    </location>
</feature>
<feature type="helix" evidence="18">
    <location>
        <begin position="153"/>
        <end position="155"/>
    </location>
</feature>
<reference key="1">
    <citation type="submission" date="1999-07" db="EMBL/GenBank/DDBJ databases">
        <title>Identification of a protein that associates with TNF intracellular domain.</title>
        <authorList>
            <person name="Kohchi C."/>
        </authorList>
    </citation>
    <scope>NUCLEOTIDE SEQUENCE [MRNA] (ISOFORM 1)</scope>
    <source>
        <tissue>Lymph node</tissue>
    </source>
</reference>
<reference key="2">
    <citation type="submission" date="1999-10" db="EMBL/GenBank/DDBJ databases">
        <title>Differential screening of human osteoclast maturation associated genes.</title>
        <authorList>
            <person name="Yamane S."/>
            <person name="Toyosaki-Maeda T."/>
            <person name="Tsuruta Y."/>
            <person name="Suzuki R."/>
            <person name="Ochi T."/>
        </authorList>
    </citation>
    <scope>NUCLEOTIDE SEQUENCE [MRNA] (ISOFORM 1)</scope>
</reference>
<reference key="3">
    <citation type="journal article" date="2000" name="J. Biol. Chem.">
        <title>Identification and characterization of CKIP-1, a novel pleckstrin homology domain-containing protein that interacts with protein kinase CK2.</title>
        <authorList>
            <person name="Bosc D.G."/>
            <person name="Graham K.C."/>
            <person name="Saulnier R.B."/>
            <person name="Zhang C."/>
            <person name="Prober D."/>
            <person name="Gietz R.D."/>
            <person name="Litchfield D.W."/>
        </authorList>
    </citation>
    <scope>NUCLEOTIDE SEQUENCE [MRNA] (ISOFORM 1)</scope>
    <scope>SUBCELLULAR LOCATION</scope>
    <scope>INTERACTION WITH CK2</scope>
</reference>
<reference key="4">
    <citation type="journal article" date="2005" name="EMBO J.">
        <title>Role for the pleckstrin homology domain-containing protein CKIP-1 in AP-1 regulation and apoptosis.</title>
        <authorList>
            <person name="Zhang L."/>
            <person name="Xing G."/>
            <person name="Tie Y."/>
            <person name="Tang Y."/>
            <person name="Tian C."/>
            <person name="Li L."/>
            <person name="Sun L."/>
            <person name="Wei H."/>
            <person name="Zhu Y."/>
            <person name="He F."/>
        </authorList>
    </citation>
    <scope>NUCLEOTIDE SEQUENCE [MRNA] (ISOFORM 1)</scope>
    <scope>FUNCTION</scope>
    <scope>INTERACTION WITH JUN AND JUND</scope>
    <scope>CLEAVAGE BY CASPASE-3</scope>
    <scope>SUBCELLULAR LOCATION</scope>
    <source>
        <tissue>Liver</tissue>
    </source>
</reference>
<reference key="5">
    <citation type="submission" date="2005-04" db="EMBL/GenBank/DDBJ databases">
        <authorList>
            <person name="Suzuki Y."/>
            <person name="Sugano S."/>
            <person name="Totoki Y."/>
            <person name="Toyoda A."/>
            <person name="Takeda T."/>
            <person name="Sakaki Y."/>
            <person name="Tanaka A."/>
            <person name="Yokoyama S."/>
        </authorList>
    </citation>
    <scope>NUCLEOTIDE SEQUENCE [LARGE SCALE MRNA] (ISOFORM 1)</scope>
    <source>
        <tissue>Kidney</tissue>
    </source>
</reference>
<reference key="6">
    <citation type="journal article" date="2006" name="Nature">
        <title>The DNA sequence and biological annotation of human chromosome 1.</title>
        <authorList>
            <person name="Gregory S.G."/>
            <person name="Barlow K.F."/>
            <person name="McLay K.E."/>
            <person name="Kaul R."/>
            <person name="Swarbreck D."/>
            <person name="Dunham A."/>
            <person name="Scott C.E."/>
            <person name="Howe K.L."/>
            <person name="Woodfine K."/>
            <person name="Spencer C.C.A."/>
            <person name="Jones M.C."/>
            <person name="Gillson C."/>
            <person name="Searle S."/>
            <person name="Zhou Y."/>
            <person name="Kokocinski F."/>
            <person name="McDonald L."/>
            <person name="Evans R."/>
            <person name="Phillips K."/>
            <person name="Atkinson A."/>
            <person name="Cooper R."/>
            <person name="Jones C."/>
            <person name="Hall R.E."/>
            <person name="Andrews T.D."/>
            <person name="Lloyd C."/>
            <person name="Ainscough R."/>
            <person name="Almeida J.P."/>
            <person name="Ambrose K.D."/>
            <person name="Anderson F."/>
            <person name="Andrew R.W."/>
            <person name="Ashwell R.I.S."/>
            <person name="Aubin K."/>
            <person name="Babbage A.K."/>
            <person name="Bagguley C.L."/>
            <person name="Bailey J."/>
            <person name="Beasley H."/>
            <person name="Bethel G."/>
            <person name="Bird C.P."/>
            <person name="Bray-Allen S."/>
            <person name="Brown J.Y."/>
            <person name="Brown A.J."/>
            <person name="Buckley D."/>
            <person name="Burton J."/>
            <person name="Bye J."/>
            <person name="Carder C."/>
            <person name="Chapman J.C."/>
            <person name="Clark S.Y."/>
            <person name="Clarke G."/>
            <person name="Clee C."/>
            <person name="Cobley V."/>
            <person name="Collier R.E."/>
            <person name="Corby N."/>
            <person name="Coville G.J."/>
            <person name="Davies J."/>
            <person name="Deadman R."/>
            <person name="Dunn M."/>
            <person name="Earthrowl M."/>
            <person name="Ellington A.G."/>
            <person name="Errington H."/>
            <person name="Frankish A."/>
            <person name="Frankland J."/>
            <person name="French L."/>
            <person name="Garner P."/>
            <person name="Garnett J."/>
            <person name="Gay L."/>
            <person name="Ghori M.R.J."/>
            <person name="Gibson R."/>
            <person name="Gilby L.M."/>
            <person name="Gillett W."/>
            <person name="Glithero R.J."/>
            <person name="Grafham D.V."/>
            <person name="Griffiths C."/>
            <person name="Griffiths-Jones S."/>
            <person name="Grocock R."/>
            <person name="Hammond S."/>
            <person name="Harrison E.S.I."/>
            <person name="Hart E."/>
            <person name="Haugen E."/>
            <person name="Heath P.D."/>
            <person name="Holmes S."/>
            <person name="Holt K."/>
            <person name="Howden P.J."/>
            <person name="Hunt A.R."/>
            <person name="Hunt S.E."/>
            <person name="Hunter G."/>
            <person name="Isherwood J."/>
            <person name="James R."/>
            <person name="Johnson C."/>
            <person name="Johnson D."/>
            <person name="Joy A."/>
            <person name="Kay M."/>
            <person name="Kershaw J.K."/>
            <person name="Kibukawa M."/>
            <person name="Kimberley A.M."/>
            <person name="King A."/>
            <person name="Knights A.J."/>
            <person name="Lad H."/>
            <person name="Laird G."/>
            <person name="Lawlor S."/>
            <person name="Leongamornlert D.A."/>
            <person name="Lloyd D.M."/>
            <person name="Loveland J."/>
            <person name="Lovell J."/>
            <person name="Lush M.J."/>
            <person name="Lyne R."/>
            <person name="Martin S."/>
            <person name="Mashreghi-Mohammadi M."/>
            <person name="Matthews L."/>
            <person name="Matthews N.S.W."/>
            <person name="McLaren S."/>
            <person name="Milne S."/>
            <person name="Mistry S."/>
            <person name="Moore M.J.F."/>
            <person name="Nickerson T."/>
            <person name="O'Dell C.N."/>
            <person name="Oliver K."/>
            <person name="Palmeiri A."/>
            <person name="Palmer S.A."/>
            <person name="Parker A."/>
            <person name="Patel D."/>
            <person name="Pearce A.V."/>
            <person name="Peck A.I."/>
            <person name="Pelan S."/>
            <person name="Phelps K."/>
            <person name="Phillimore B.J."/>
            <person name="Plumb R."/>
            <person name="Rajan J."/>
            <person name="Raymond C."/>
            <person name="Rouse G."/>
            <person name="Saenphimmachak C."/>
            <person name="Sehra H.K."/>
            <person name="Sheridan E."/>
            <person name="Shownkeen R."/>
            <person name="Sims S."/>
            <person name="Skuce C.D."/>
            <person name="Smith M."/>
            <person name="Steward C."/>
            <person name="Subramanian S."/>
            <person name="Sycamore N."/>
            <person name="Tracey A."/>
            <person name="Tromans A."/>
            <person name="Van Helmond Z."/>
            <person name="Wall M."/>
            <person name="Wallis J.M."/>
            <person name="White S."/>
            <person name="Whitehead S.L."/>
            <person name="Wilkinson J.E."/>
            <person name="Willey D.L."/>
            <person name="Williams H."/>
            <person name="Wilming L."/>
            <person name="Wray P.W."/>
            <person name="Wu Z."/>
            <person name="Coulson A."/>
            <person name="Vaudin M."/>
            <person name="Sulston J.E."/>
            <person name="Durbin R.M."/>
            <person name="Hubbard T."/>
            <person name="Wooster R."/>
            <person name="Dunham I."/>
            <person name="Carter N.P."/>
            <person name="McVean G."/>
            <person name="Ross M.T."/>
            <person name="Harrow J."/>
            <person name="Olson M.V."/>
            <person name="Beck S."/>
            <person name="Rogers J."/>
            <person name="Bentley D.R."/>
        </authorList>
    </citation>
    <scope>NUCLEOTIDE SEQUENCE [LARGE SCALE GENOMIC DNA]</scope>
</reference>
<reference key="7">
    <citation type="submission" date="2005-09" db="EMBL/GenBank/DDBJ databases">
        <authorList>
            <person name="Mural R.J."/>
            <person name="Istrail S."/>
            <person name="Sutton G.G."/>
            <person name="Florea L."/>
            <person name="Halpern A.L."/>
            <person name="Mobarry C.M."/>
            <person name="Lippert R."/>
            <person name="Walenz B."/>
            <person name="Shatkay H."/>
            <person name="Dew I."/>
            <person name="Miller J.R."/>
            <person name="Flanigan M.J."/>
            <person name="Edwards N.J."/>
            <person name="Bolanos R."/>
            <person name="Fasulo D."/>
            <person name="Halldorsson B.V."/>
            <person name="Hannenhalli S."/>
            <person name="Turner R."/>
            <person name="Yooseph S."/>
            <person name="Lu F."/>
            <person name="Nusskern D.R."/>
            <person name="Shue B.C."/>
            <person name="Zheng X.H."/>
            <person name="Zhong F."/>
            <person name="Delcher A.L."/>
            <person name="Huson D.H."/>
            <person name="Kravitz S.A."/>
            <person name="Mouchard L."/>
            <person name="Reinert K."/>
            <person name="Remington K.A."/>
            <person name="Clark A.G."/>
            <person name="Waterman M.S."/>
            <person name="Eichler E.E."/>
            <person name="Adams M.D."/>
            <person name="Hunkapiller M.W."/>
            <person name="Myers E.W."/>
            <person name="Venter J.C."/>
        </authorList>
    </citation>
    <scope>NUCLEOTIDE SEQUENCE [LARGE SCALE GENOMIC DNA]</scope>
</reference>
<reference key="8">
    <citation type="journal article" date="2004" name="Genome Res.">
        <title>The status, quality, and expansion of the NIH full-length cDNA project: the Mammalian Gene Collection (MGC).</title>
        <authorList>
            <consortium name="The MGC Project Team"/>
        </authorList>
    </citation>
    <scope>NUCLEOTIDE SEQUENCE [LARGE SCALE MRNA] (ISOFORM 1)</scope>
    <scope>PARTIAL NUCLEOTIDE SEQUENCE [LARGE SCALE MRNA] (ISOFORM 2)</scope>
    <source>
        <tissue>Kidney</tissue>
        <tissue>Muscle</tissue>
    </source>
</reference>
<reference key="9">
    <citation type="journal article" date="2001" name="Genome Res.">
        <title>Gene expression profiling in human fetal liver and identification of tissue- and developmental-stage-specific genes through compiled expression profiles and efficient cloning of full-length cDNAs.</title>
        <authorList>
            <person name="Yu Y."/>
            <person name="Zhang C."/>
            <person name="Zhou G."/>
            <person name="Wu S."/>
            <person name="Qu X."/>
            <person name="Wei H."/>
            <person name="Xing G."/>
            <person name="Dong C."/>
            <person name="Zhai Y."/>
            <person name="Wan J."/>
            <person name="Ouyang S."/>
            <person name="Li L."/>
            <person name="Zhang S."/>
            <person name="Zhou K."/>
            <person name="Zhang Y."/>
            <person name="Wu C."/>
            <person name="He F."/>
        </authorList>
    </citation>
    <scope>NUCLEOTIDE SEQUENCE [LARGE SCALE MRNA] OF 6-409</scope>
    <source>
        <tissue>Fetal liver</tissue>
    </source>
</reference>
<reference key="10">
    <citation type="journal article" date="2001" name="Mol. Cell. Biochem.">
        <title>Functional specialization of CK2 isoforms and characterization of isoform-specific binding partners.</title>
        <authorList>
            <person name="Litchfield D.W."/>
            <person name="Bosc D.G."/>
            <person name="Canton D.A."/>
            <person name="Saulnier R.B."/>
            <person name="Vilk G."/>
            <person name="Zhang C."/>
        </authorList>
    </citation>
    <scope>SUBCELLULAR LOCATION</scope>
    <scope>INTERACTION WITH CK2</scope>
</reference>
<reference key="11">
    <citation type="journal article" date="2004" name="J. Biol. Chem.">
        <title>The pleckstrin homology domain of CK2 interacting protein-1 is required for interactions and recruitment of protein kinase CK2 to the plasma membrane.</title>
        <authorList>
            <person name="Olsten M.E.K."/>
            <person name="Canton D.A."/>
            <person name="Zhang C."/>
            <person name="Walton P.A."/>
            <person name="Litchfield D.W."/>
        </authorList>
    </citation>
    <scope>SUBCELLULAR LOCATION</scope>
    <scope>INTERACTION WITH CK2</scope>
    <scope>MUTAGENESIS OF LYS-42; ARG-44 AND TRP-123</scope>
</reference>
<reference key="12">
    <citation type="journal article" date="2004" name="Mol. Cell. Biol.">
        <title>Role for the pleckstrin homology domain-containing protein CKIP-1 in phosphatidylinositol 3-kinase-regulated muscle differentiation.</title>
        <authorList>
            <person name="Safi A."/>
            <person name="Vandromme M."/>
            <person name="Caussanel S."/>
            <person name="Valdacci L."/>
            <person name="Baas D."/>
            <person name="Vidal M."/>
            <person name="Brun G."/>
            <person name="Schaeffer L."/>
            <person name="Goillot E."/>
        </authorList>
    </citation>
    <scope>FUNCTION</scope>
    <scope>INTERACTION WITH PHOSPHATIDYL INOSITOL 3-KINASE</scope>
    <scope>SUBCELLULAR LOCATION</scope>
    <scope>INDUCTION</scope>
</reference>
<reference key="13">
    <citation type="journal article" date="2005" name="Mol. Cell. Biol.">
        <title>The pleckstrin homology domain-containing protein CKIP-1 is involved in regulation of cell morphology and the actin cytoskeleton and interaction with actin capping protein.</title>
        <authorList>
            <person name="Canton D.A."/>
            <person name="Olsten M.E.K."/>
            <person name="Kim K."/>
            <person name="Doherty-Kirby A."/>
            <person name="Lajoie G."/>
            <person name="Cooper J.A."/>
            <person name="Litchfield D.W."/>
        </authorList>
    </citation>
    <scope>FUNCTION</scope>
    <scope>INTERACTION WITH CK2 AND ACTIN CAPPING PROTEINS</scope>
    <scope>SUBCELLULAR LOCATION</scope>
    <scope>SUBUNIT</scope>
</reference>
<reference key="14">
    <citation type="journal article" date="2006" name="Cell. Signal.">
        <title>CKIP-1 recruits nuclear ATM partially to the plasma membrane through interaction with ATM.</title>
        <authorList>
            <person name="Zhang L."/>
            <person name="Tie Y."/>
            <person name="Tian C."/>
            <person name="Xing G."/>
            <person name="Song Y."/>
            <person name="Zhu Y."/>
            <person name="Sun Z."/>
            <person name="He F."/>
        </authorList>
    </citation>
    <scope>FUNCTION</scope>
    <scope>INTERACTION WITH ATM</scope>
    <scope>SUBCELLULAR LOCATION</scope>
</reference>
<reference key="15">
    <citation type="journal article" date="2006" name="J. Biol. Chem.">
        <title>The role of CKIP-1 in cell morphology depends on its interaction with actin-capping protein.</title>
        <authorList>
            <person name="Canton D.A."/>
            <person name="Olsten M.E.K."/>
            <person name="Niederstrasser H."/>
            <person name="Cooper J.A."/>
            <person name="Litchfield D.W."/>
        </authorList>
    </citation>
    <scope>FUNCTION</scope>
    <scope>INTERACTION WITH ACTIN CAPPING PROTEINS</scope>
    <scope>MUTAGENESIS OF ARG-155 AND ARG-157</scope>
</reference>
<reference key="16">
    <citation type="journal article" date="2007" name="Cancer Res.">
        <title>Casein kinase 2-interacting protein-1, a novel Akt pleckstrin homology domain-interacting protein, down-regulates PI3K/Akt signaling and suppresses tumor growth in vivo.</title>
        <authorList>
            <person name="Tokuda E."/>
            <person name="Fujita N."/>
            <person name="Oh-hara T."/>
            <person name="Sato S."/>
            <person name="Kurata A."/>
            <person name="Katayama R."/>
            <person name="Itoh T."/>
            <person name="Takenawa T."/>
            <person name="Miyazono K."/>
            <person name="Tsuruo T."/>
        </authorList>
    </citation>
    <scope>FUNCTION</scope>
    <scope>INTERACTION WITH PKB; PTDINS(3,5)P2; PTDINS(4,5)P2 AND PTDINS(3,4,5)P2</scope>
</reference>
<reference key="17">
    <citation type="journal article" date="2007" name="Cell. Signal.">
        <title>The PH domain containing protein CKIP-1 binds to IFP35 and Nmi and is involved in cytokine signaling.</title>
        <authorList>
            <person name="Zhang L."/>
            <person name="Tang Y."/>
            <person name="Tie Y."/>
            <person name="Tian C."/>
            <person name="Wang J."/>
            <person name="Dong Y."/>
            <person name="Sun Z."/>
            <person name="He F."/>
        </authorList>
    </citation>
    <scope>FUNCTION</scope>
    <scope>INTERACTION WITH IFP35 AND NMI</scope>
    <scope>INDUCTION BY IL2 AND IFNG</scope>
    <scope>TISSUE SPECIFICITY</scope>
    <scope>SUBUNIT</scope>
</reference>
<keyword id="KW-0002">3D-structure</keyword>
<keyword id="KW-0025">Alternative splicing</keyword>
<keyword id="KW-1003">Cell membrane</keyword>
<keyword id="KW-0963">Cytoplasm</keyword>
<keyword id="KW-0472">Membrane</keyword>
<keyword id="KW-0539">Nucleus</keyword>
<keyword id="KW-0597">Phosphoprotein</keyword>
<keyword id="KW-1267">Proteomics identification</keyword>
<keyword id="KW-1185">Reference proteome</keyword>
<keyword id="KW-0043">Tumor suppressor</keyword>
<proteinExistence type="evidence at protein level"/>
<protein>
    <recommendedName>
        <fullName>Pleckstrin homology domain-containing family O member 1</fullName>
        <shortName>PH domain-containing family O member 1</shortName>
    </recommendedName>
    <alternativeName>
        <fullName>C-Jun-binding protein</fullName>
        <shortName>JBP</shortName>
    </alternativeName>
    <alternativeName>
        <fullName>Casein kinase 2-interacting protein 1</fullName>
        <shortName>CK2-interacting protein 1</shortName>
        <shortName>CKIP-1</shortName>
    </alternativeName>
    <alternativeName>
        <fullName>Osteoclast maturation-associated gene 120 protein</fullName>
    </alternativeName>
</protein>
<organism>
    <name type="scientific">Homo sapiens</name>
    <name type="common">Human</name>
    <dbReference type="NCBI Taxonomy" id="9606"/>
    <lineage>
        <taxon>Eukaryota</taxon>
        <taxon>Metazoa</taxon>
        <taxon>Chordata</taxon>
        <taxon>Craniata</taxon>
        <taxon>Vertebrata</taxon>
        <taxon>Euteleostomi</taxon>
        <taxon>Mammalia</taxon>
        <taxon>Eutheria</taxon>
        <taxon>Euarchontoglires</taxon>
        <taxon>Primates</taxon>
        <taxon>Haplorrhini</taxon>
        <taxon>Catarrhini</taxon>
        <taxon>Hominidae</taxon>
        <taxon>Homo</taxon>
    </lineage>
</organism>
<dbReference type="EMBL" id="AF168676">
    <property type="protein sequence ID" value="AAF89644.1"/>
    <property type="molecule type" value="mRNA"/>
</dbReference>
<dbReference type="EMBL" id="AF192912">
    <property type="protein sequence ID" value="AAQ13826.1"/>
    <property type="status" value="ALT_INIT"/>
    <property type="molecule type" value="mRNA"/>
</dbReference>
<dbReference type="EMBL" id="AF291105">
    <property type="protein sequence ID" value="AAK28027.1"/>
    <property type="molecule type" value="mRNA"/>
</dbReference>
<dbReference type="EMBL" id="AF217956">
    <property type="protein sequence ID" value="AAK71509.1"/>
    <property type="molecule type" value="mRNA"/>
</dbReference>
<dbReference type="EMBL" id="AK222921">
    <property type="protein sequence ID" value="BAD96641.1"/>
    <property type="molecule type" value="mRNA"/>
</dbReference>
<dbReference type="EMBL" id="AL358073">
    <property type="protein sequence ID" value="CAI14264.1"/>
    <property type="molecule type" value="Genomic_DNA"/>
</dbReference>
<dbReference type="EMBL" id="CH471121">
    <property type="protein sequence ID" value="EAW53580.1"/>
    <property type="molecule type" value="Genomic_DNA"/>
</dbReference>
<dbReference type="EMBL" id="BC010149">
    <property type="protein sequence ID" value="AAH10149.1"/>
    <property type="molecule type" value="mRNA"/>
</dbReference>
<dbReference type="EMBL" id="BC023533">
    <property type="protein sequence ID" value="AAH23533.2"/>
    <property type="molecule type" value="mRNA"/>
</dbReference>
<dbReference type="EMBL" id="AF073836">
    <property type="protein sequence ID" value="AAF13461.1"/>
    <property type="status" value="ALT_INIT"/>
    <property type="molecule type" value="mRNA"/>
</dbReference>
<dbReference type="CCDS" id="CCDS945.1">
    <molecule id="Q53GL0-1"/>
</dbReference>
<dbReference type="RefSeq" id="NP_001291651.1">
    <property type="nucleotide sequence ID" value="NM_001304722.1"/>
</dbReference>
<dbReference type="RefSeq" id="NP_001291652.1">
    <property type="nucleotide sequence ID" value="NM_001304723.1"/>
</dbReference>
<dbReference type="RefSeq" id="NP_001291653.1">
    <property type="nucleotide sequence ID" value="NM_001304724.1"/>
</dbReference>
<dbReference type="RefSeq" id="NP_057358.2">
    <molecule id="Q53GL0-1"/>
    <property type="nucleotide sequence ID" value="NM_016274.5"/>
</dbReference>
<dbReference type="RefSeq" id="XP_016856909.1">
    <property type="nucleotide sequence ID" value="XM_017001420.1"/>
</dbReference>
<dbReference type="PDB" id="3AA1">
    <property type="method" value="X-ray"/>
    <property type="resolution" value="1.90 A"/>
    <property type="chains" value="C=148-170"/>
</dbReference>
<dbReference type="PDBsum" id="3AA1"/>
<dbReference type="SMR" id="Q53GL0"/>
<dbReference type="BioGRID" id="119355">
    <property type="interactions" value="82"/>
</dbReference>
<dbReference type="DIP" id="DIP-46903N"/>
<dbReference type="FunCoup" id="Q53GL0">
    <property type="interactions" value="229"/>
</dbReference>
<dbReference type="IntAct" id="Q53GL0">
    <property type="interactions" value="87"/>
</dbReference>
<dbReference type="MINT" id="Q53GL0"/>
<dbReference type="STRING" id="9606.ENSP00000358120"/>
<dbReference type="GlyGen" id="Q53GL0">
    <property type="glycosylation" value="1 site"/>
</dbReference>
<dbReference type="iPTMnet" id="Q53GL0"/>
<dbReference type="PhosphoSitePlus" id="Q53GL0"/>
<dbReference type="BioMuta" id="PLEKHO1"/>
<dbReference type="DMDM" id="160419242"/>
<dbReference type="jPOST" id="Q53GL0"/>
<dbReference type="MassIVE" id="Q53GL0"/>
<dbReference type="PaxDb" id="9606-ENSP00000358120"/>
<dbReference type="PeptideAtlas" id="Q53GL0"/>
<dbReference type="ProteomicsDB" id="62483">
    <molecule id="Q53GL0-1"/>
</dbReference>
<dbReference type="ProteomicsDB" id="62484">
    <molecule id="Q53GL0-2"/>
</dbReference>
<dbReference type="Pumba" id="Q53GL0"/>
<dbReference type="Antibodypedia" id="35196">
    <property type="antibodies" value="186 antibodies from 30 providers"/>
</dbReference>
<dbReference type="DNASU" id="51177"/>
<dbReference type="Ensembl" id="ENST00000369124.5">
    <molecule id="Q53GL0-1"/>
    <property type="protein sequence ID" value="ENSP00000358120.4"/>
    <property type="gene ID" value="ENSG00000023902.14"/>
</dbReference>
<dbReference type="GeneID" id="51177"/>
<dbReference type="KEGG" id="hsa:51177"/>
<dbReference type="MANE-Select" id="ENST00000369124.5">
    <property type="protein sequence ID" value="ENSP00000358120.4"/>
    <property type="RefSeq nucleotide sequence ID" value="NM_016274.6"/>
    <property type="RefSeq protein sequence ID" value="NP_057358.2"/>
</dbReference>
<dbReference type="UCSC" id="uc001ett.4">
    <molecule id="Q53GL0-1"/>
    <property type="organism name" value="human"/>
</dbReference>
<dbReference type="AGR" id="HGNC:24310"/>
<dbReference type="CTD" id="51177"/>
<dbReference type="DisGeNET" id="51177"/>
<dbReference type="GeneCards" id="PLEKHO1"/>
<dbReference type="HGNC" id="HGNC:24310">
    <property type="gene designation" value="PLEKHO1"/>
</dbReference>
<dbReference type="HPA" id="ENSG00000023902">
    <property type="expression patterns" value="Tissue enhanced (intestine)"/>
</dbReference>
<dbReference type="MIM" id="608335">
    <property type="type" value="gene"/>
</dbReference>
<dbReference type="neXtProt" id="NX_Q53GL0"/>
<dbReference type="OpenTargets" id="ENSG00000023902"/>
<dbReference type="PharmGKB" id="PA142671167"/>
<dbReference type="VEuPathDB" id="HostDB:ENSG00000023902"/>
<dbReference type="eggNOG" id="ENOG502QSPU">
    <property type="taxonomic scope" value="Eukaryota"/>
</dbReference>
<dbReference type="GeneTree" id="ENSGT00530000063760"/>
<dbReference type="HOGENOM" id="CLU_052292_0_0_1"/>
<dbReference type="InParanoid" id="Q53GL0"/>
<dbReference type="OMA" id="VQPEKVG"/>
<dbReference type="OrthoDB" id="6358316at2759"/>
<dbReference type="PAN-GO" id="Q53GL0">
    <property type="GO annotations" value="3 GO annotations based on evolutionary models"/>
</dbReference>
<dbReference type="PhylomeDB" id="Q53GL0"/>
<dbReference type="TreeFam" id="TF333115"/>
<dbReference type="PathwayCommons" id="Q53GL0"/>
<dbReference type="SignaLink" id="Q53GL0"/>
<dbReference type="BioGRID-ORCS" id="51177">
    <property type="hits" value="22 hits in 1165 CRISPR screens"/>
</dbReference>
<dbReference type="ChiTaRS" id="PLEKHO1">
    <property type="organism name" value="human"/>
</dbReference>
<dbReference type="EvolutionaryTrace" id="Q53GL0"/>
<dbReference type="GeneWiki" id="PLEKHO1"/>
<dbReference type="GenomeRNAi" id="51177"/>
<dbReference type="Pharos" id="Q53GL0">
    <property type="development level" value="Tbio"/>
</dbReference>
<dbReference type="PRO" id="PR:Q53GL0"/>
<dbReference type="Proteomes" id="UP000005640">
    <property type="component" value="Chromosome 1"/>
</dbReference>
<dbReference type="RNAct" id="Q53GL0">
    <property type="molecule type" value="protein"/>
</dbReference>
<dbReference type="Bgee" id="ENSG00000023902">
    <property type="expression patterns" value="Expressed in lower esophagus muscularis layer and 168 other cell types or tissues"/>
</dbReference>
<dbReference type="ExpressionAtlas" id="Q53GL0">
    <property type="expression patterns" value="baseline and differential"/>
</dbReference>
<dbReference type="GO" id="GO:0005737">
    <property type="term" value="C:cytoplasm"/>
    <property type="evidence" value="ECO:0007669"/>
    <property type="project" value="UniProtKB-SubCell"/>
</dbReference>
<dbReference type="GO" id="GO:0036195">
    <property type="term" value="C:muscle cell projection membrane"/>
    <property type="evidence" value="ECO:0000318"/>
    <property type="project" value="GO_Central"/>
</dbReference>
<dbReference type="GO" id="GO:0005634">
    <property type="term" value="C:nucleus"/>
    <property type="evidence" value="ECO:0007669"/>
    <property type="project" value="UniProtKB-SubCell"/>
</dbReference>
<dbReference type="GO" id="GO:0032587">
    <property type="term" value="C:ruffle membrane"/>
    <property type="evidence" value="ECO:0000318"/>
    <property type="project" value="GO_Central"/>
</dbReference>
<dbReference type="GO" id="GO:0072673">
    <property type="term" value="P:lamellipodium morphogenesis"/>
    <property type="evidence" value="ECO:0007669"/>
    <property type="project" value="Ensembl"/>
</dbReference>
<dbReference type="GO" id="GO:0007520">
    <property type="term" value="P:myoblast fusion"/>
    <property type="evidence" value="ECO:0007669"/>
    <property type="project" value="Ensembl"/>
</dbReference>
<dbReference type="GO" id="GO:0051451">
    <property type="term" value="P:myoblast migration"/>
    <property type="evidence" value="ECO:0007669"/>
    <property type="project" value="Ensembl"/>
</dbReference>
<dbReference type="GO" id="GO:0008360">
    <property type="term" value="P:regulation of cell shape"/>
    <property type="evidence" value="ECO:0007669"/>
    <property type="project" value="Ensembl"/>
</dbReference>
<dbReference type="GO" id="GO:1901739">
    <property type="term" value="P:regulation of myoblast fusion"/>
    <property type="evidence" value="ECO:0000318"/>
    <property type="project" value="GO_Central"/>
</dbReference>
<dbReference type="CDD" id="cd13317">
    <property type="entry name" value="PH_PLEKHO1_PLEKHO2"/>
    <property type="match status" value="1"/>
</dbReference>
<dbReference type="FunFam" id="2.30.29.30:FF:000237">
    <property type="entry name" value="pleckstrin homology domain-containing family O member 1"/>
    <property type="match status" value="1"/>
</dbReference>
<dbReference type="Gene3D" id="2.30.29.30">
    <property type="entry name" value="Pleckstrin-homology domain (PH domain)/Phosphotyrosine-binding domain (PTB)"/>
    <property type="match status" value="1"/>
</dbReference>
<dbReference type="InterPro" id="IPR011993">
    <property type="entry name" value="PH-like_dom_sf"/>
</dbReference>
<dbReference type="InterPro" id="IPR001849">
    <property type="entry name" value="PH_domain"/>
</dbReference>
<dbReference type="InterPro" id="IPR043448">
    <property type="entry name" value="PKHO1/2"/>
</dbReference>
<dbReference type="PANTHER" id="PTHR15871">
    <property type="entry name" value="PH DOMAIN-CONTAINING PROTEIN"/>
    <property type="match status" value="1"/>
</dbReference>
<dbReference type="PANTHER" id="PTHR15871:SF1">
    <property type="entry name" value="PLECKSTRIN HOMOLOGY DOMAIN-CONTAINING FAMILY O MEMBER 1"/>
    <property type="match status" value="1"/>
</dbReference>
<dbReference type="Pfam" id="PF00169">
    <property type="entry name" value="PH"/>
    <property type="match status" value="1"/>
</dbReference>
<dbReference type="SMART" id="SM00233">
    <property type="entry name" value="PH"/>
    <property type="match status" value="1"/>
</dbReference>
<dbReference type="SUPFAM" id="SSF50729">
    <property type="entry name" value="PH domain-like"/>
    <property type="match status" value="1"/>
</dbReference>
<dbReference type="PROSITE" id="PS50003">
    <property type="entry name" value="PH_DOMAIN"/>
    <property type="match status" value="1"/>
</dbReference>
<sequence>MMKKNNSAKRGPQDGNQQPAPPEKVGWVRKFCGKGIFREIWKNRYVVLKGDQLYISEKEVKDEKNIQEVFDLSDYEKCEELRKSKSRSKKNHSKFTLAHSKQPGNTAPNLIFLAVSPEEKESWINALNSAITRAKNRILDEVTVEEDSYLAHPTRDRAKIQHSRRPPTRGHLMAVASTSTSDGMLTLDLIQEEDPSPEEPTSCAESFRVDLDKSVAQLAGSRRRADSDRIQPSADRASSLSRPWEKTDKGATYTPQAPKKLTPTEKGRCASLEEILSQRDAASARTLQLRAEEPPTPALPNPGQLSRIQDLVARKLEETQELLAEVQGLGDGKRKAKDPPRSPPDSESEQLLLETERLLGEASSNWSQAKRVLQEVRELRDLYRQMDLQTPDSHLRQTTPHSQYRKSLM</sequence>
<accession>Q53GL0</accession>
<accession>Q336K5</accession>
<accession>Q8IZ51</accession>
<accession>Q9NRV3</accession>
<accession>Q9UL48</accession>
<comment type="function">
    <text evidence="8 10 11 12 13 14 15">Plays a role in the regulation of the actin cytoskeleton through its interactions with actin capping protein (CP). May function to target CK2 to the plasma membrane thereby serving as an adapter to facilitate the phosphorylation of CP by protein kinase 2 (CK2). Appears to target ATM to the plasma membrane. Appears to also inhibit tumor cell growth by inhibiting AKT-mediated cell-survival. Also implicated in PI3K-regulated muscle differentiation, the regulation of AP-1 activity (plasma membrane bound AP-1 regulator that translocates to the nucleus) and the promotion of apoptosis induced by tumor necrosis factor TNF. When bound to PKB, it inhibits it probably by decreasing PKB level of phosphorylation.</text>
</comment>
<comment type="subunit">
    <text evidence="6 7 8 9 10 11 12 13 14 15">Heterodimer or homodimer. Interacts with CK2 and actin capping subunits (capping protein CP-alpha and CP-beta). CKIP1 and CK2 together inhibit the activity of actin capping protein at the barbed ends of actin filaments. Interacts with ATM, IFP35, JUN, JUND, NMI and PI3K. Interacts with AKT1, AKT2 and AKT3 (each isozyme of PKB), PtdIns(3,5)P2, PtdIns(4,5)P2 and PtdIns(3,4,5)P2.</text>
</comment>
<comment type="interaction">
    <interactant intactId="EBI-949945">
        <id>Q53GL0</id>
    </interactant>
    <interactant intactId="EBI-10225815">
        <id>Q08AM2</id>
        <label>ADAM33</label>
    </interactant>
    <organismsDiffer>false</organismsDiffer>
    <experiments>3</experiments>
</comment>
<comment type="interaction">
    <interactant intactId="EBI-949945">
        <id>Q53GL0</id>
    </interactant>
    <interactant intactId="EBI-752094">
        <id>Q12982</id>
        <label>BNIP2</label>
    </interactant>
    <organismsDiffer>false</organismsDiffer>
    <experiments>3</experiments>
</comment>
<comment type="interaction">
    <interactant intactId="EBI-949945">
        <id>Q53GL0</id>
    </interactant>
    <interactant intactId="EBI-12244618">
        <id>Q6PL45-2</id>
        <label>BRICD5</label>
    </interactant>
    <organismsDiffer>false</organismsDiffer>
    <experiments>3</experiments>
</comment>
<comment type="interaction">
    <interactant intactId="EBI-949945">
        <id>Q53GL0</id>
    </interactant>
    <interactant intactId="EBI-12003442">
        <id>Q8WVX3-2</id>
        <label>C4orf3</label>
    </interactant>
    <organismsDiffer>false</organismsDiffer>
    <experiments>3</experiments>
</comment>
<comment type="interaction">
    <interactant intactId="EBI-949945">
        <id>Q53GL0</id>
    </interactant>
    <interactant intactId="EBI-741885">
        <id>Q96LK0</id>
        <label>CEP19</label>
    </interactant>
    <organismsDiffer>false</organismsDiffer>
    <experiments>3</experiments>
</comment>
<comment type="interaction">
    <interactant intactId="EBI-949945">
        <id>Q53GL0</id>
    </interactant>
    <interactant intactId="EBI-10241815">
        <id>Q4VAQ0</id>
        <label>COL8A2</label>
    </interactant>
    <organismsDiffer>false</organismsDiffer>
    <experiments>3</experiments>
</comment>
<comment type="interaction">
    <interactant intactId="EBI-949945">
        <id>Q53GL0</id>
    </interactant>
    <interactant intactId="EBI-1752413">
        <id>P78329</id>
        <label>CYP4F2</label>
    </interactant>
    <organismsDiffer>false</organismsDiffer>
    <experiments>3</experiments>
</comment>
<comment type="interaction">
    <interactant intactId="EBI-949945">
        <id>Q53GL0</id>
    </interactant>
    <interactant intactId="EBI-2830349">
        <id>Q7Z4F1</id>
        <label>LRP10</label>
    </interactant>
    <organismsDiffer>false</organismsDiffer>
    <experiments>3</experiments>
</comment>
<comment type="interaction">
    <interactant intactId="EBI-949945">
        <id>Q53GL0</id>
    </interactant>
    <interactant intactId="EBI-17873222">
        <id>Q15546</id>
        <label>MMD</label>
    </interactant>
    <organismsDiffer>false</organismsDiffer>
    <experiments>3</experiments>
</comment>
<comment type="interaction">
    <interactant intactId="EBI-949945">
        <id>Q53GL0</id>
    </interactant>
    <interactant intactId="EBI-3921185">
        <id>Q9H115</id>
        <label>NAPB</label>
    </interactant>
    <organismsDiffer>false</organismsDiffer>
    <experiments>3</experiments>
</comment>
<comment type="interaction">
    <interactant intactId="EBI-949945">
        <id>Q53GL0</id>
    </interactant>
    <interactant intactId="EBI-357745">
        <id>P62195</id>
        <label>PSMC5</label>
    </interactant>
    <organismsDiffer>false</organismsDiffer>
    <experiments>10</experiments>
</comment>
<comment type="interaction">
    <interactant intactId="EBI-949945">
        <id>Q53GL0</id>
    </interactant>
    <interactant intactId="EBI-976466">
        <id>Q9HCE7</id>
        <label>SMURF1</label>
    </interactant>
    <organismsDiffer>false</organismsDiffer>
    <experiments>2</experiments>
</comment>
<comment type="interaction">
    <interactant intactId="EBI-949945">
        <id>Q53GL0</id>
    </interactant>
    <interactant intactId="EBI-9845742">
        <id>Q9HCE7-2</id>
        <label>SMURF1</label>
    </interactant>
    <organismsDiffer>false</organismsDiffer>
    <experiments>4</experiments>
</comment>
<comment type="interaction">
    <interactant intactId="EBI-949945">
        <id>Q53GL0</id>
    </interactant>
    <interactant intactId="EBI-311394">
        <id>Q9C0I4</id>
        <label>THSD7B</label>
    </interactant>
    <organismsDiffer>false</organismsDiffer>
    <experiments>3</experiments>
</comment>
<comment type="interaction">
    <interactant intactId="EBI-949945">
        <id>Q53GL0</id>
    </interactant>
    <interactant intactId="EBI-10173151">
        <id>A2RU14</id>
        <label>TMEM218</label>
    </interactant>
    <organismsDiffer>false</organismsDiffer>
    <experiments>3</experiments>
</comment>
<comment type="interaction">
    <interactant intactId="EBI-949945">
        <id>Q53GL0</id>
    </interactant>
    <interactant intactId="EBI-359977">
        <id>P01375</id>
        <label>TNF</label>
    </interactant>
    <organismsDiffer>false</organismsDiffer>
    <experiments>3</experiments>
</comment>
<comment type="interaction">
    <interactant intactId="EBI-949945">
        <id>Q53GL0</id>
    </interactant>
    <interactant intactId="EBI-765817">
        <id>Q9Y228</id>
        <label>TRAF3IP3</label>
    </interactant>
    <organismsDiffer>false</organismsDiffer>
    <experiments>3</experiments>
</comment>
<comment type="interaction">
    <interactant intactId="EBI-949945">
        <id>Q53GL0</id>
    </interactant>
    <interactant intactId="EBI-11996766">
        <id>Q8N609</id>
        <label>TRAM1L1</label>
    </interactant>
    <organismsDiffer>false</organismsDiffer>
    <experiments>3</experiments>
</comment>
<comment type="interaction">
    <interactant intactId="EBI-949945">
        <id>Q53GL0</id>
    </interactant>
    <interactant intactId="EBI-12045841">
        <id>Q86UF1</id>
        <label>TSPAN33</label>
    </interactant>
    <organismsDiffer>false</organismsDiffer>
    <experiments>3</experiments>
</comment>
<comment type="interaction">
    <interactant intactId="EBI-949945">
        <id>Q53GL0</id>
    </interactant>
    <interactant intactId="EBI-12195249">
        <id>Q5TGU0</id>
        <label>TSPO2</label>
    </interactant>
    <organismsDiffer>false</organismsDiffer>
    <experiments>3</experiments>
</comment>
<comment type="interaction">
    <interactant intactId="EBI-949945">
        <id>Q53GL0</id>
    </interactant>
    <interactant intactId="EBI-722343">
        <id>Q15836</id>
        <label>VAMP3</label>
    </interactant>
    <organismsDiffer>false</organismsDiffer>
    <experiments>3</experiments>
</comment>
<comment type="interaction">
    <interactant intactId="EBI-949945">
        <id>Q53GL0</id>
    </interactant>
    <interactant intactId="EBI-718439">
        <id>O95159</id>
        <label>ZFPL1</label>
    </interactant>
    <organismsDiffer>false</organismsDiffer>
    <experiments>3</experiments>
</comment>
<comment type="subcellular location">
    <subcellularLocation>
        <location evidence="6 7 8 9 12">Cell membrane</location>
        <topology evidence="17">Peripheral membrane protein</topology>
    </subcellularLocation>
    <subcellularLocation>
        <location evidence="6 7 10">Nucleus</location>
    </subcellularLocation>
    <subcellularLocation>
        <location evidence="10">Cytoplasm</location>
    </subcellularLocation>
    <text evidence="8 10 16">Predominantly localized to the plasma membrane through the binding to phosphatidylinositol 3-phosphate (PubMed:14729969). In C2C12 cells, with the absence of growth factor, it is found in the nucleus (PubMed:14729969). It rapidly translocates to the plasma membrane after insulin stimulation (PubMed:14729969). In response to TNF, it translocates from the plasma membrane to the cytoplasm and then to the nucleus accompanied by cleavage by caspase-3 (PubMed:15706351). However, the subcellular location is highly dependent of the cell type, and this explains why it is found exclusively at the plasma membrane, in some type of cells (Probable).</text>
</comment>
<comment type="alternative products">
    <event type="alternative splicing"/>
    <isoform>
        <id>Q53GL0-1</id>
        <name>1</name>
        <sequence type="displayed"/>
    </isoform>
    <isoform>
        <id>Q53GL0-2</id>
        <name>2</name>
        <sequence type="described" ref="VSP_029282"/>
    </isoform>
</comment>
<comment type="tissue specificity">
    <text evidence="14">Abundantly expressed in skeletal muscle and heart, moderately in kidney, liver, brain and placenta and sparingly in the pancreas and lung. Easily detectable in cell lines such as MOLT-4, HEK293 and Jurkat.</text>
</comment>
<comment type="induction">
    <text evidence="8 14">Up-regulated by IFNG/IFN-gamma and IL2/interleukin-2 or in C2C12 cells.</text>
</comment>
<comment type="PTM">
    <text evidence="10">C-terminal fragments could be released during apoptosis via caspase-3-dependent cleavage.</text>
</comment>
<comment type="sequence caution" evidence="16">
    <conflict type="erroneous initiation">
        <sequence resource="EMBL-CDS" id="AAF13461"/>
    </conflict>
</comment>
<comment type="sequence caution" evidence="16">
    <conflict type="erroneous initiation">
        <sequence resource="EMBL-CDS" id="AAQ13826"/>
    </conflict>
</comment>
<gene>
    <name type="primary">PLEKHO1</name>
    <name type="synonym">CKIP1</name>
    <name type="synonym">OC120</name>
    <name type="ORF">HQ0024c</name>
</gene>
<name>PKHO1_HUMAN</name>